<evidence type="ECO:0000255" key="1">
    <source>
        <dbReference type="HAMAP-Rule" id="MF_00141"/>
    </source>
</evidence>
<name>EFP_CORK4</name>
<organism>
    <name type="scientific">Corynebacterium kroppenstedtii (strain DSM 44385 / JCM 11950 / CIP 105744 / CCUG 35717)</name>
    <dbReference type="NCBI Taxonomy" id="645127"/>
    <lineage>
        <taxon>Bacteria</taxon>
        <taxon>Bacillati</taxon>
        <taxon>Actinomycetota</taxon>
        <taxon>Actinomycetes</taxon>
        <taxon>Mycobacteriales</taxon>
        <taxon>Corynebacteriaceae</taxon>
        <taxon>Corynebacterium</taxon>
    </lineage>
</organism>
<reference key="1">
    <citation type="journal article" date="2008" name="J. Biotechnol.">
        <title>Ultrafast pyrosequencing of Corynebacterium kroppenstedtii DSM44385 revealed insights into the physiology of a lipophilic corynebacterium that lacks mycolic acids.</title>
        <authorList>
            <person name="Tauch A."/>
            <person name="Schneider J."/>
            <person name="Szczepanowski R."/>
            <person name="Tilker A."/>
            <person name="Viehoever P."/>
            <person name="Gartemann K.-H."/>
            <person name="Arnold W."/>
            <person name="Blom J."/>
            <person name="Brinkrolf K."/>
            <person name="Brune I."/>
            <person name="Goetker S."/>
            <person name="Weisshaar B."/>
            <person name="Goesmann A."/>
            <person name="Droege M."/>
            <person name="Puehler A."/>
        </authorList>
    </citation>
    <scope>NUCLEOTIDE SEQUENCE [LARGE SCALE GENOMIC DNA]</scope>
    <source>
        <strain>DSM 44385 / JCM 11950 / CIP 105744 / CCUG 35717</strain>
    </source>
</reference>
<accession>C4LIU5</accession>
<feature type="chain" id="PRO_1000203261" description="Elongation factor P">
    <location>
        <begin position="1"/>
        <end position="187"/>
    </location>
</feature>
<comment type="function">
    <text evidence="1">Involved in peptide bond synthesis. Stimulates efficient translation and peptide-bond synthesis on native or reconstituted 70S ribosomes in vitro. Probably functions indirectly by altering the affinity of the ribosome for aminoacyl-tRNA, thus increasing their reactivity as acceptors for peptidyl transferase.</text>
</comment>
<comment type="pathway">
    <text evidence="1">Protein biosynthesis; polypeptide chain elongation.</text>
</comment>
<comment type="subcellular location">
    <subcellularLocation>
        <location evidence="1">Cytoplasm</location>
    </subcellularLocation>
</comment>
<comment type="similarity">
    <text evidence="1">Belongs to the elongation factor P family.</text>
</comment>
<sequence>MATTADFKNGLVLKLDNKLQQIVEFQHVKPGKGPAFVRTKLKDVVSGKVVDKTFNAGVKVETATVDRRDMTYLYNDGTDYVVMDDKNYEQIPLSPELMGDGARFLLENMPVQVSFYEDQPLFVELPVSVELKVKHTDPGLQGDRSTGGTKPATLETGAEVQVPLFIETGNVLKIDTRDGSYLSRVNN</sequence>
<gene>
    <name evidence="1" type="primary">efp</name>
    <name type="ordered locus">ckrop_0996</name>
</gene>
<keyword id="KW-0963">Cytoplasm</keyword>
<keyword id="KW-0251">Elongation factor</keyword>
<keyword id="KW-0648">Protein biosynthesis</keyword>
<keyword id="KW-1185">Reference proteome</keyword>
<proteinExistence type="inferred from homology"/>
<protein>
    <recommendedName>
        <fullName evidence="1">Elongation factor P</fullName>
        <shortName evidence="1">EF-P</shortName>
    </recommendedName>
</protein>
<dbReference type="EMBL" id="CP001620">
    <property type="protein sequence ID" value="ACR17750.1"/>
    <property type="molecule type" value="Genomic_DNA"/>
</dbReference>
<dbReference type="RefSeq" id="WP_012731637.1">
    <property type="nucleotide sequence ID" value="NC_012704.1"/>
</dbReference>
<dbReference type="SMR" id="C4LIU5"/>
<dbReference type="STRING" id="645127.ckrop_0996"/>
<dbReference type="GeneID" id="92725885"/>
<dbReference type="KEGG" id="ckp:ckrop_0996"/>
<dbReference type="eggNOG" id="COG0231">
    <property type="taxonomic scope" value="Bacteria"/>
</dbReference>
<dbReference type="HOGENOM" id="CLU_074944_0_1_11"/>
<dbReference type="OrthoDB" id="9801844at2"/>
<dbReference type="UniPathway" id="UPA00345"/>
<dbReference type="Proteomes" id="UP000001473">
    <property type="component" value="Chromosome"/>
</dbReference>
<dbReference type="GO" id="GO:0005737">
    <property type="term" value="C:cytoplasm"/>
    <property type="evidence" value="ECO:0007669"/>
    <property type="project" value="UniProtKB-SubCell"/>
</dbReference>
<dbReference type="GO" id="GO:0003746">
    <property type="term" value="F:translation elongation factor activity"/>
    <property type="evidence" value="ECO:0007669"/>
    <property type="project" value="UniProtKB-UniRule"/>
</dbReference>
<dbReference type="GO" id="GO:0043043">
    <property type="term" value="P:peptide biosynthetic process"/>
    <property type="evidence" value="ECO:0007669"/>
    <property type="project" value="InterPro"/>
</dbReference>
<dbReference type="CDD" id="cd04470">
    <property type="entry name" value="S1_EF-P_repeat_1"/>
    <property type="match status" value="1"/>
</dbReference>
<dbReference type="CDD" id="cd05794">
    <property type="entry name" value="S1_EF-P_repeat_2"/>
    <property type="match status" value="1"/>
</dbReference>
<dbReference type="FunFam" id="2.30.30.30:FF:000003">
    <property type="entry name" value="Elongation factor P"/>
    <property type="match status" value="1"/>
</dbReference>
<dbReference type="FunFam" id="2.40.50.140:FF:000004">
    <property type="entry name" value="Elongation factor P"/>
    <property type="match status" value="1"/>
</dbReference>
<dbReference type="FunFam" id="2.40.50.140:FF:000009">
    <property type="entry name" value="Elongation factor P"/>
    <property type="match status" value="1"/>
</dbReference>
<dbReference type="Gene3D" id="2.30.30.30">
    <property type="match status" value="1"/>
</dbReference>
<dbReference type="Gene3D" id="2.40.50.140">
    <property type="entry name" value="Nucleic acid-binding proteins"/>
    <property type="match status" value="2"/>
</dbReference>
<dbReference type="HAMAP" id="MF_00141">
    <property type="entry name" value="EF_P"/>
    <property type="match status" value="1"/>
</dbReference>
<dbReference type="InterPro" id="IPR015365">
    <property type="entry name" value="Elong-fact-P_C"/>
</dbReference>
<dbReference type="InterPro" id="IPR012340">
    <property type="entry name" value="NA-bd_OB-fold"/>
</dbReference>
<dbReference type="InterPro" id="IPR014722">
    <property type="entry name" value="Rib_uL2_dom2"/>
</dbReference>
<dbReference type="InterPro" id="IPR020599">
    <property type="entry name" value="Transl_elong_fac_P/YeiP"/>
</dbReference>
<dbReference type="InterPro" id="IPR013185">
    <property type="entry name" value="Transl_elong_KOW-like"/>
</dbReference>
<dbReference type="InterPro" id="IPR001059">
    <property type="entry name" value="Transl_elong_P/YeiP_cen"/>
</dbReference>
<dbReference type="InterPro" id="IPR013852">
    <property type="entry name" value="Transl_elong_P/YeiP_CS"/>
</dbReference>
<dbReference type="InterPro" id="IPR011768">
    <property type="entry name" value="Transl_elongation_fac_P"/>
</dbReference>
<dbReference type="InterPro" id="IPR008991">
    <property type="entry name" value="Translation_prot_SH3-like_sf"/>
</dbReference>
<dbReference type="NCBIfam" id="TIGR00038">
    <property type="entry name" value="efp"/>
    <property type="match status" value="1"/>
</dbReference>
<dbReference type="NCBIfam" id="NF001810">
    <property type="entry name" value="PRK00529.1"/>
    <property type="match status" value="1"/>
</dbReference>
<dbReference type="PANTHER" id="PTHR30053">
    <property type="entry name" value="ELONGATION FACTOR P"/>
    <property type="match status" value="1"/>
</dbReference>
<dbReference type="PANTHER" id="PTHR30053:SF12">
    <property type="entry name" value="ELONGATION FACTOR P (EF-P) FAMILY PROTEIN"/>
    <property type="match status" value="1"/>
</dbReference>
<dbReference type="Pfam" id="PF01132">
    <property type="entry name" value="EFP"/>
    <property type="match status" value="1"/>
</dbReference>
<dbReference type="Pfam" id="PF08207">
    <property type="entry name" value="EFP_N"/>
    <property type="match status" value="1"/>
</dbReference>
<dbReference type="Pfam" id="PF09285">
    <property type="entry name" value="Elong-fact-P_C"/>
    <property type="match status" value="1"/>
</dbReference>
<dbReference type="PIRSF" id="PIRSF005901">
    <property type="entry name" value="EF-P"/>
    <property type="match status" value="1"/>
</dbReference>
<dbReference type="SMART" id="SM01185">
    <property type="entry name" value="EFP"/>
    <property type="match status" value="1"/>
</dbReference>
<dbReference type="SMART" id="SM00841">
    <property type="entry name" value="Elong-fact-P_C"/>
    <property type="match status" value="1"/>
</dbReference>
<dbReference type="SUPFAM" id="SSF50249">
    <property type="entry name" value="Nucleic acid-binding proteins"/>
    <property type="match status" value="2"/>
</dbReference>
<dbReference type="SUPFAM" id="SSF50104">
    <property type="entry name" value="Translation proteins SH3-like domain"/>
    <property type="match status" value="1"/>
</dbReference>
<dbReference type="PROSITE" id="PS01275">
    <property type="entry name" value="EFP"/>
    <property type="match status" value="1"/>
</dbReference>